<feature type="chain" id="PRO_1000005324" description="Small ribosomal subunit protein bS6">
    <location>
        <begin position="1"/>
        <end position="124"/>
    </location>
</feature>
<feature type="region of interest" description="Disordered" evidence="2">
    <location>
        <begin position="96"/>
        <end position="124"/>
    </location>
</feature>
<feature type="compositionally biased region" description="Polar residues" evidence="2">
    <location>
        <begin position="115"/>
        <end position="124"/>
    </location>
</feature>
<sequence length="124" mass="14322">MRHYEIVFIVHPDQSEQVPAMIERYKQLVTSQNGNVHRVEDWGRRQMAYMIQKLAKAHYVCLNIECGKETLAELEHAFKFNDAVLRHLIVQTKKAETAPSPMMKEVQREEARKAAQTTTEGQAA</sequence>
<keyword id="KW-1185">Reference proteome</keyword>
<keyword id="KW-0687">Ribonucleoprotein</keyword>
<keyword id="KW-0689">Ribosomal protein</keyword>
<keyword id="KW-0694">RNA-binding</keyword>
<keyword id="KW-0699">rRNA-binding</keyword>
<protein>
    <recommendedName>
        <fullName evidence="1">Small ribosomal subunit protein bS6</fullName>
    </recommendedName>
    <alternativeName>
        <fullName evidence="3">30S ribosomal protein S6</fullName>
    </alternativeName>
</protein>
<evidence type="ECO:0000255" key="1">
    <source>
        <dbReference type="HAMAP-Rule" id="MF_00360"/>
    </source>
</evidence>
<evidence type="ECO:0000256" key="2">
    <source>
        <dbReference type="SAM" id="MobiDB-lite"/>
    </source>
</evidence>
<evidence type="ECO:0000305" key="3"/>
<name>RS6_CUPNH</name>
<comment type="function">
    <text evidence="1">Binds together with bS18 to 16S ribosomal RNA.</text>
</comment>
<comment type="similarity">
    <text evidence="1">Belongs to the bacterial ribosomal protein bS6 family.</text>
</comment>
<dbReference type="EMBL" id="AM260479">
    <property type="protein sequence ID" value="CAJ93376.1"/>
    <property type="molecule type" value="Genomic_DNA"/>
</dbReference>
<dbReference type="RefSeq" id="WP_010809513.1">
    <property type="nucleotide sequence ID" value="NZ_CP039287.1"/>
</dbReference>
<dbReference type="SMR" id="Q0K9E5"/>
<dbReference type="STRING" id="381666.H16_A2279"/>
<dbReference type="GeneID" id="34310605"/>
<dbReference type="KEGG" id="reh:H16_A2279"/>
<dbReference type="eggNOG" id="COG0360">
    <property type="taxonomic scope" value="Bacteria"/>
</dbReference>
<dbReference type="HOGENOM" id="CLU_113441_6_1_4"/>
<dbReference type="OrthoDB" id="9812702at2"/>
<dbReference type="Proteomes" id="UP000008210">
    <property type="component" value="Chromosome 1"/>
</dbReference>
<dbReference type="GO" id="GO:0022627">
    <property type="term" value="C:cytosolic small ribosomal subunit"/>
    <property type="evidence" value="ECO:0007669"/>
    <property type="project" value="TreeGrafter"/>
</dbReference>
<dbReference type="GO" id="GO:0070181">
    <property type="term" value="F:small ribosomal subunit rRNA binding"/>
    <property type="evidence" value="ECO:0007669"/>
    <property type="project" value="TreeGrafter"/>
</dbReference>
<dbReference type="GO" id="GO:0003735">
    <property type="term" value="F:structural constituent of ribosome"/>
    <property type="evidence" value="ECO:0007669"/>
    <property type="project" value="InterPro"/>
</dbReference>
<dbReference type="GO" id="GO:0006412">
    <property type="term" value="P:translation"/>
    <property type="evidence" value="ECO:0007669"/>
    <property type="project" value="UniProtKB-UniRule"/>
</dbReference>
<dbReference type="CDD" id="cd00473">
    <property type="entry name" value="bS6"/>
    <property type="match status" value="1"/>
</dbReference>
<dbReference type="Gene3D" id="3.30.70.60">
    <property type="match status" value="1"/>
</dbReference>
<dbReference type="HAMAP" id="MF_00360">
    <property type="entry name" value="Ribosomal_bS6"/>
    <property type="match status" value="1"/>
</dbReference>
<dbReference type="InterPro" id="IPR000529">
    <property type="entry name" value="Ribosomal_bS6"/>
</dbReference>
<dbReference type="InterPro" id="IPR035980">
    <property type="entry name" value="Ribosomal_bS6_sf"/>
</dbReference>
<dbReference type="InterPro" id="IPR020814">
    <property type="entry name" value="Ribosomal_S6_plastid/chlpt"/>
</dbReference>
<dbReference type="InterPro" id="IPR014717">
    <property type="entry name" value="Transl_elong_EF1B/ribsomal_bS6"/>
</dbReference>
<dbReference type="NCBIfam" id="TIGR00166">
    <property type="entry name" value="S6"/>
    <property type="match status" value="1"/>
</dbReference>
<dbReference type="PANTHER" id="PTHR21011">
    <property type="entry name" value="MITOCHONDRIAL 28S RIBOSOMAL PROTEIN S6"/>
    <property type="match status" value="1"/>
</dbReference>
<dbReference type="PANTHER" id="PTHR21011:SF1">
    <property type="entry name" value="SMALL RIBOSOMAL SUBUNIT PROTEIN BS6M"/>
    <property type="match status" value="1"/>
</dbReference>
<dbReference type="Pfam" id="PF01250">
    <property type="entry name" value="Ribosomal_S6"/>
    <property type="match status" value="1"/>
</dbReference>
<dbReference type="SUPFAM" id="SSF54995">
    <property type="entry name" value="Ribosomal protein S6"/>
    <property type="match status" value="1"/>
</dbReference>
<proteinExistence type="inferred from homology"/>
<gene>
    <name evidence="1" type="primary">rpsF</name>
    <name type="ordered locus">H16_A2279</name>
</gene>
<organism>
    <name type="scientific">Cupriavidus necator (strain ATCC 17699 / DSM 428 / KCTC 22496 / NCIMB 10442 / H16 / Stanier 337)</name>
    <name type="common">Ralstonia eutropha</name>
    <dbReference type="NCBI Taxonomy" id="381666"/>
    <lineage>
        <taxon>Bacteria</taxon>
        <taxon>Pseudomonadati</taxon>
        <taxon>Pseudomonadota</taxon>
        <taxon>Betaproteobacteria</taxon>
        <taxon>Burkholderiales</taxon>
        <taxon>Burkholderiaceae</taxon>
        <taxon>Cupriavidus</taxon>
    </lineage>
</organism>
<accession>Q0K9E5</accession>
<reference key="1">
    <citation type="journal article" date="2006" name="Nat. Biotechnol.">
        <title>Genome sequence of the bioplastic-producing 'Knallgas' bacterium Ralstonia eutropha H16.</title>
        <authorList>
            <person name="Pohlmann A."/>
            <person name="Fricke W.F."/>
            <person name="Reinecke F."/>
            <person name="Kusian B."/>
            <person name="Liesegang H."/>
            <person name="Cramm R."/>
            <person name="Eitinger T."/>
            <person name="Ewering C."/>
            <person name="Poetter M."/>
            <person name="Schwartz E."/>
            <person name="Strittmatter A."/>
            <person name="Voss I."/>
            <person name="Gottschalk G."/>
            <person name="Steinbuechel A."/>
            <person name="Friedrich B."/>
            <person name="Bowien B."/>
        </authorList>
    </citation>
    <scope>NUCLEOTIDE SEQUENCE [LARGE SCALE GENOMIC DNA]</scope>
    <source>
        <strain>ATCC 17699 / DSM 428 / KCTC 22496 / NCIMB 10442 / H16 / Stanier 337</strain>
    </source>
</reference>